<organism>
    <name type="scientific">Serratia proteamaculans (strain 568)</name>
    <dbReference type="NCBI Taxonomy" id="399741"/>
    <lineage>
        <taxon>Bacteria</taxon>
        <taxon>Pseudomonadati</taxon>
        <taxon>Pseudomonadota</taxon>
        <taxon>Gammaproteobacteria</taxon>
        <taxon>Enterobacterales</taxon>
        <taxon>Yersiniaceae</taxon>
        <taxon>Serratia</taxon>
    </lineage>
</organism>
<gene>
    <name type="ordered locus">Spro_1934</name>
</gene>
<protein>
    <recommendedName>
        <fullName evidence="1">Probable phosphatase Spro_1934</fullName>
        <ecNumber evidence="1">3.1.3.-</ecNumber>
    </recommendedName>
</protein>
<keyword id="KW-0378">Hydrolase</keyword>
<keyword id="KW-0479">Metal-binding</keyword>
<keyword id="KW-0862">Zinc</keyword>
<name>Y1934_SERP5</name>
<reference key="1">
    <citation type="submission" date="2007-09" db="EMBL/GenBank/DDBJ databases">
        <title>Complete sequence of chromosome of Serratia proteamaculans 568.</title>
        <authorList>
            <consortium name="US DOE Joint Genome Institute"/>
            <person name="Copeland A."/>
            <person name="Lucas S."/>
            <person name="Lapidus A."/>
            <person name="Barry K."/>
            <person name="Glavina del Rio T."/>
            <person name="Dalin E."/>
            <person name="Tice H."/>
            <person name="Pitluck S."/>
            <person name="Chain P."/>
            <person name="Malfatti S."/>
            <person name="Shin M."/>
            <person name="Vergez L."/>
            <person name="Schmutz J."/>
            <person name="Larimer F."/>
            <person name="Land M."/>
            <person name="Hauser L."/>
            <person name="Kyrpides N."/>
            <person name="Kim E."/>
            <person name="Taghavi S."/>
            <person name="Newman L."/>
            <person name="Vangronsveld J."/>
            <person name="van der Lelie D."/>
            <person name="Richardson P."/>
        </authorList>
    </citation>
    <scope>NUCLEOTIDE SEQUENCE [LARGE SCALE GENOMIC DNA]</scope>
    <source>
        <strain>568</strain>
    </source>
</reference>
<sequence>MYPVDLHMHTVASTHAYSTLHDYIVEARQKGIKLFAITDHGPDMADAPHYWHFMNMHVWPRLVDGVGILRGIEANIKNRQGDIDCTGPMLDKIDVIIAGFHEPVFAPQDKAANTEAMIAAMAQGDVHIISHPGNPRYPIDIAAVAAAAARYEVALELNNSSFTHSRKGSEDNCRAIAAAVRDAGGWLALGSDSHIAFSLGGFEHCERIIAEVEFPQERILNVSPRRLLDFLERRGKPAIAELADL</sequence>
<accession>A8GD47</accession>
<proteinExistence type="inferred from homology"/>
<comment type="cofactor">
    <cofactor evidence="1">
        <name>Zn(2+)</name>
        <dbReference type="ChEBI" id="CHEBI:29105"/>
    </cofactor>
    <text evidence="1">Binds 3 Zn(2+) ions per subunit.</text>
</comment>
<comment type="subunit">
    <text evidence="1">Homotrimer.</text>
</comment>
<comment type="similarity">
    <text evidence="1">Belongs to the PHP family.</text>
</comment>
<evidence type="ECO:0000255" key="1">
    <source>
        <dbReference type="HAMAP-Rule" id="MF_01561"/>
    </source>
</evidence>
<feature type="chain" id="PRO_1000069023" description="Probable phosphatase Spro_1934">
    <location>
        <begin position="1"/>
        <end position="245"/>
    </location>
</feature>
<feature type="binding site" evidence="1">
    <location>
        <position position="7"/>
    </location>
    <ligand>
        <name>Zn(2+)</name>
        <dbReference type="ChEBI" id="CHEBI:29105"/>
        <label>1</label>
    </ligand>
</feature>
<feature type="binding site" evidence="1">
    <location>
        <position position="9"/>
    </location>
    <ligand>
        <name>Zn(2+)</name>
        <dbReference type="ChEBI" id="CHEBI:29105"/>
        <label>1</label>
    </ligand>
</feature>
<feature type="binding site" evidence="1">
    <location>
        <position position="15"/>
    </location>
    <ligand>
        <name>Zn(2+)</name>
        <dbReference type="ChEBI" id="CHEBI:29105"/>
        <label>2</label>
    </ligand>
</feature>
<feature type="binding site" evidence="1">
    <location>
        <position position="40"/>
    </location>
    <ligand>
        <name>Zn(2+)</name>
        <dbReference type="ChEBI" id="CHEBI:29105"/>
        <label>2</label>
    </ligand>
</feature>
<feature type="binding site" evidence="1">
    <location>
        <position position="73"/>
    </location>
    <ligand>
        <name>Zn(2+)</name>
        <dbReference type="ChEBI" id="CHEBI:29105"/>
        <label>1</label>
    </ligand>
</feature>
<feature type="binding site" evidence="1">
    <location>
        <position position="73"/>
    </location>
    <ligand>
        <name>Zn(2+)</name>
        <dbReference type="ChEBI" id="CHEBI:29105"/>
        <label>3</label>
    </ligand>
</feature>
<feature type="binding site" evidence="1">
    <location>
        <position position="101"/>
    </location>
    <ligand>
        <name>Zn(2+)</name>
        <dbReference type="ChEBI" id="CHEBI:29105"/>
        <label>3</label>
    </ligand>
</feature>
<feature type="binding site" evidence="1">
    <location>
        <position position="131"/>
    </location>
    <ligand>
        <name>Zn(2+)</name>
        <dbReference type="ChEBI" id="CHEBI:29105"/>
        <label>3</label>
    </ligand>
</feature>
<feature type="binding site" evidence="1">
    <location>
        <position position="192"/>
    </location>
    <ligand>
        <name>Zn(2+)</name>
        <dbReference type="ChEBI" id="CHEBI:29105"/>
        <label>1</label>
    </ligand>
</feature>
<feature type="binding site" evidence="1">
    <location>
        <position position="194"/>
    </location>
    <ligand>
        <name>Zn(2+)</name>
        <dbReference type="ChEBI" id="CHEBI:29105"/>
        <label>2</label>
    </ligand>
</feature>
<dbReference type="EC" id="3.1.3.-" evidence="1"/>
<dbReference type="EMBL" id="CP000826">
    <property type="protein sequence ID" value="ABV41037.1"/>
    <property type="molecule type" value="Genomic_DNA"/>
</dbReference>
<dbReference type="SMR" id="A8GD47"/>
<dbReference type="STRING" id="399741.Spro_1934"/>
<dbReference type="KEGG" id="spe:Spro_1934"/>
<dbReference type="eggNOG" id="COG1387">
    <property type="taxonomic scope" value="Bacteria"/>
</dbReference>
<dbReference type="HOGENOM" id="CLU_061999_0_1_6"/>
<dbReference type="OrthoDB" id="9808747at2"/>
<dbReference type="GO" id="GO:0005829">
    <property type="term" value="C:cytosol"/>
    <property type="evidence" value="ECO:0007669"/>
    <property type="project" value="TreeGrafter"/>
</dbReference>
<dbReference type="GO" id="GO:0016791">
    <property type="term" value="F:phosphatase activity"/>
    <property type="evidence" value="ECO:0007669"/>
    <property type="project" value="UniProtKB-UniRule"/>
</dbReference>
<dbReference type="GO" id="GO:0008270">
    <property type="term" value="F:zinc ion binding"/>
    <property type="evidence" value="ECO:0007669"/>
    <property type="project" value="UniProtKB-UniRule"/>
</dbReference>
<dbReference type="GO" id="GO:0071978">
    <property type="term" value="P:bacterial-type flagellum-dependent swarming motility"/>
    <property type="evidence" value="ECO:0007669"/>
    <property type="project" value="TreeGrafter"/>
</dbReference>
<dbReference type="CDD" id="cd07437">
    <property type="entry name" value="PHP_HisPPase_Ycdx_like"/>
    <property type="match status" value="1"/>
</dbReference>
<dbReference type="FunFam" id="3.20.20.140:FF:000008">
    <property type="entry name" value="Probable phosphatase YcdX"/>
    <property type="match status" value="1"/>
</dbReference>
<dbReference type="Gene3D" id="3.20.20.140">
    <property type="entry name" value="Metal-dependent hydrolases"/>
    <property type="match status" value="1"/>
</dbReference>
<dbReference type="HAMAP" id="MF_01561">
    <property type="entry name" value="YcdX_phosphat"/>
    <property type="match status" value="1"/>
</dbReference>
<dbReference type="InterPro" id="IPR023710">
    <property type="entry name" value="Phosphatase_YcdX_put"/>
</dbReference>
<dbReference type="InterPro" id="IPR004013">
    <property type="entry name" value="PHP_dom"/>
</dbReference>
<dbReference type="InterPro" id="IPR050243">
    <property type="entry name" value="PHP_phosphatase"/>
</dbReference>
<dbReference type="InterPro" id="IPR003141">
    <property type="entry name" value="Pol/His_phosphatase_N"/>
</dbReference>
<dbReference type="InterPro" id="IPR016195">
    <property type="entry name" value="Pol/histidinol_Pase-like"/>
</dbReference>
<dbReference type="NCBIfam" id="NF006702">
    <property type="entry name" value="PRK09248.1"/>
    <property type="match status" value="1"/>
</dbReference>
<dbReference type="PANTHER" id="PTHR36928">
    <property type="entry name" value="PHOSPHATASE YCDX-RELATED"/>
    <property type="match status" value="1"/>
</dbReference>
<dbReference type="PANTHER" id="PTHR36928:SF1">
    <property type="entry name" value="PHOSPHATASE YCDX-RELATED"/>
    <property type="match status" value="1"/>
</dbReference>
<dbReference type="Pfam" id="PF02811">
    <property type="entry name" value="PHP"/>
    <property type="match status" value="1"/>
</dbReference>
<dbReference type="SMART" id="SM00481">
    <property type="entry name" value="POLIIIAc"/>
    <property type="match status" value="1"/>
</dbReference>
<dbReference type="SUPFAM" id="SSF89550">
    <property type="entry name" value="PHP domain-like"/>
    <property type="match status" value="1"/>
</dbReference>